<keyword id="KW-0106">Calcium</keyword>
<keyword id="KW-0903">Direct protein sequencing</keyword>
<keyword id="KW-1015">Disulfide bond</keyword>
<keyword id="KW-1199">Hemostasis impairing toxin</keyword>
<keyword id="KW-0378">Hydrolase</keyword>
<keyword id="KW-0442">Lipid degradation</keyword>
<keyword id="KW-0443">Lipid metabolism</keyword>
<keyword id="KW-0479">Metal-binding</keyword>
<keyword id="KW-1201">Platelet aggregation inhibiting toxin</keyword>
<keyword id="KW-0964">Secreted</keyword>
<keyword id="KW-0732">Signal</keyword>
<keyword id="KW-0800">Toxin</keyword>
<evidence type="ECO:0000250" key="1"/>
<evidence type="ECO:0000250" key="2">
    <source>
        <dbReference type="UniProtKB" id="O42187"/>
    </source>
</evidence>
<evidence type="ECO:0000250" key="3">
    <source>
        <dbReference type="UniProtKB" id="P06859"/>
    </source>
</evidence>
<evidence type="ECO:0000255" key="4">
    <source>
        <dbReference type="PROSITE-ProRule" id="PRU10035"/>
    </source>
</evidence>
<evidence type="ECO:0000255" key="5">
    <source>
        <dbReference type="PROSITE-ProRule" id="PRU10036"/>
    </source>
</evidence>
<evidence type="ECO:0000269" key="6">
    <source>
    </source>
</evidence>
<evidence type="ECO:0000305" key="7"/>
<feature type="signal peptide" evidence="6">
    <location>
        <begin position="1"/>
        <end position="16"/>
    </location>
</feature>
<feature type="chain" id="PRO_0000419065" description="Acidic phospholipase A2 Ts-A1">
    <location>
        <begin position="17"/>
        <end position="138"/>
    </location>
</feature>
<feature type="active site" evidence="3">
    <location>
        <position position="63"/>
    </location>
</feature>
<feature type="active site" evidence="3">
    <location>
        <position position="105"/>
    </location>
</feature>
<feature type="binding site" evidence="2">
    <location>
        <position position="43"/>
    </location>
    <ligand>
        <name>Ca(2+)</name>
        <dbReference type="ChEBI" id="CHEBI:29108"/>
    </ligand>
</feature>
<feature type="binding site" evidence="2">
    <location>
        <position position="45"/>
    </location>
    <ligand>
        <name>Ca(2+)</name>
        <dbReference type="ChEBI" id="CHEBI:29108"/>
    </ligand>
</feature>
<feature type="binding site" evidence="2">
    <location>
        <position position="47"/>
    </location>
    <ligand>
        <name>Ca(2+)</name>
        <dbReference type="ChEBI" id="CHEBI:29108"/>
    </ligand>
</feature>
<feature type="binding site" evidence="2">
    <location>
        <position position="64"/>
    </location>
    <ligand>
        <name>Ca(2+)</name>
        <dbReference type="ChEBI" id="CHEBI:29108"/>
    </ligand>
</feature>
<feature type="disulfide bond" evidence="2">
    <location>
        <begin position="42"/>
        <end position="131"/>
    </location>
</feature>
<feature type="disulfide bond" evidence="2">
    <location>
        <begin position="44"/>
        <end position="60"/>
    </location>
</feature>
<feature type="disulfide bond" evidence="2">
    <location>
        <begin position="59"/>
        <end position="111"/>
    </location>
</feature>
<feature type="disulfide bond" evidence="2">
    <location>
        <begin position="65"/>
        <end position="138"/>
    </location>
</feature>
<feature type="disulfide bond" evidence="2">
    <location>
        <begin position="66"/>
        <end position="104"/>
    </location>
</feature>
<feature type="disulfide bond" evidence="2">
    <location>
        <begin position="73"/>
        <end position="97"/>
    </location>
</feature>
<feature type="disulfide bond" evidence="2">
    <location>
        <begin position="91"/>
        <end position="102"/>
    </location>
</feature>
<proteinExistence type="evidence at protein level"/>
<sequence length="138" mass="15534">MRTLWIMAVLQVGVEGHLMQFETLIMKVAGRSGVWYYGSYGCFCGAGGQGRPQDASDRCCFVHDCCYGKVNGCDPKKDFYTYSEENGAIVCGGDDPCKKEICECDKDAAICFRDNKDTYDNKYWFFPAKNCQEESEPC</sequence>
<accession>Q6H3D0</accession>
<organism>
    <name type="scientific">Trimeresurus stejnegeri</name>
    <name type="common">Chinese green tree viper</name>
    <name type="synonym">Viridovipera stejnegeri</name>
    <dbReference type="NCBI Taxonomy" id="39682"/>
    <lineage>
        <taxon>Eukaryota</taxon>
        <taxon>Metazoa</taxon>
        <taxon>Chordata</taxon>
        <taxon>Craniata</taxon>
        <taxon>Vertebrata</taxon>
        <taxon>Euteleostomi</taxon>
        <taxon>Lepidosauria</taxon>
        <taxon>Squamata</taxon>
        <taxon>Bifurcata</taxon>
        <taxon>Unidentata</taxon>
        <taxon>Episquamata</taxon>
        <taxon>Toxicofera</taxon>
        <taxon>Serpentes</taxon>
        <taxon>Colubroidea</taxon>
        <taxon>Viperidae</taxon>
        <taxon>Crotalinae</taxon>
        <taxon>Trimeresurus</taxon>
    </lineage>
</organism>
<dbReference type="EC" id="3.1.1.4"/>
<dbReference type="EMBL" id="AY211939">
    <property type="protein sequence ID" value="AAP48897.1"/>
    <property type="molecule type" value="mRNA"/>
</dbReference>
<dbReference type="SMR" id="Q6H3D0"/>
<dbReference type="GO" id="GO:0005576">
    <property type="term" value="C:extracellular region"/>
    <property type="evidence" value="ECO:0007669"/>
    <property type="project" value="UniProtKB-SubCell"/>
</dbReference>
<dbReference type="GO" id="GO:0005509">
    <property type="term" value="F:calcium ion binding"/>
    <property type="evidence" value="ECO:0007669"/>
    <property type="project" value="InterPro"/>
</dbReference>
<dbReference type="GO" id="GO:0047498">
    <property type="term" value="F:calcium-dependent phospholipase A2 activity"/>
    <property type="evidence" value="ECO:0007669"/>
    <property type="project" value="TreeGrafter"/>
</dbReference>
<dbReference type="GO" id="GO:0005543">
    <property type="term" value="F:phospholipid binding"/>
    <property type="evidence" value="ECO:0007669"/>
    <property type="project" value="TreeGrafter"/>
</dbReference>
<dbReference type="GO" id="GO:0090729">
    <property type="term" value="F:toxin activity"/>
    <property type="evidence" value="ECO:0007669"/>
    <property type="project" value="UniProtKB-KW"/>
</dbReference>
<dbReference type="GO" id="GO:0050482">
    <property type="term" value="P:arachidonate secretion"/>
    <property type="evidence" value="ECO:0007669"/>
    <property type="project" value="InterPro"/>
</dbReference>
<dbReference type="GO" id="GO:0016042">
    <property type="term" value="P:lipid catabolic process"/>
    <property type="evidence" value="ECO:0007669"/>
    <property type="project" value="UniProtKB-KW"/>
</dbReference>
<dbReference type="GO" id="GO:0042130">
    <property type="term" value="P:negative regulation of T cell proliferation"/>
    <property type="evidence" value="ECO:0007669"/>
    <property type="project" value="TreeGrafter"/>
</dbReference>
<dbReference type="GO" id="GO:0006644">
    <property type="term" value="P:phospholipid metabolic process"/>
    <property type="evidence" value="ECO:0007669"/>
    <property type="project" value="InterPro"/>
</dbReference>
<dbReference type="CDD" id="cd00125">
    <property type="entry name" value="PLA2c"/>
    <property type="match status" value="1"/>
</dbReference>
<dbReference type="FunFam" id="1.20.90.10:FF:000001">
    <property type="entry name" value="Basic phospholipase A2 homolog"/>
    <property type="match status" value="1"/>
</dbReference>
<dbReference type="Gene3D" id="1.20.90.10">
    <property type="entry name" value="Phospholipase A2 domain"/>
    <property type="match status" value="1"/>
</dbReference>
<dbReference type="InterPro" id="IPR001211">
    <property type="entry name" value="PLipase_A2"/>
</dbReference>
<dbReference type="InterPro" id="IPR033112">
    <property type="entry name" value="PLipase_A2_Asp_AS"/>
</dbReference>
<dbReference type="InterPro" id="IPR016090">
    <property type="entry name" value="PLipase_A2_dom"/>
</dbReference>
<dbReference type="InterPro" id="IPR036444">
    <property type="entry name" value="PLipase_A2_dom_sf"/>
</dbReference>
<dbReference type="InterPro" id="IPR033113">
    <property type="entry name" value="PLipase_A2_His_AS"/>
</dbReference>
<dbReference type="PANTHER" id="PTHR11716">
    <property type="entry name" value="PHOSPHOLIPASE A2 FAMILY MEMBER"/>
    <property type="match status" value="1"/>
</dbReference>
<dbReference type="PANTHER" id="PTHR11716:SF9">
    <property type="entry name" value="PHOSPHOLIPASE A2, MEMBRANE ASSOCIATED"/>
    <property type="match status" value="1"/>
</dbReference>
<dbReference type="Pfam" id="PF00068">
    <property type="entry name" value="Phospholip_A2_1"/>
    <property type="match status" value="1"/>
</dbReference>
<dbReference type="PRINTS" id="PR00389">
    <property type="entry name" value="PHPHLIPASEA2"/>
</dbReference>
<dbReference type="SMART" id="SM00085">
    <property type="entry name" value="PA2c"/>
    <property type="match status" value="1"/>
</dbReference>
<dbReference type="SUPFAM" id="SSF48619">
    <property type="entry name" value="Phospholipase A2, PLA2"/>
    <property type="match status" value="1"/>
</dbReference>
<dbReference type="PROSITE" id="PS00119">
    <property type="entry name" value="PA2_ASP"/>
    <property type="match status" value="1"/>
</dbReference>
<dbReference type="PROSITE" id="PS00118">
    <property type="entry name" value="PA2_HIS"/>
    <property type="match status" value="1"/>
</dbReference>
<reference key="1">
    <citation type="journal article" date="2004" name="Biochem. J.">
        <title>Venom phospholipases A2 of bamboo viper (Trimeresurus stejnegeri): molecular characterization, geographic variations and evidence of multiple ancestries.</title>
        <authorList>
            <person name="Tsai I.-H."/>
            <person name="Wang Y.-M."/>
            <person name="Chen Y.-H."/>
            <person name="Tsai T.-S."/>
            <person name="Tu M.-C."/>
        </authorList>
    </citation>
    <scope>NUCLEOTIDE SEQUENCE [MRNA]</scope>
    <scope>PROTEIN SEQUENCE OF 17-39</scope>
    <scope>FUNCTION</scope>
    <scope>DEVELOPMENTAL STAGE</scope>
    <scope>MASS SPECTROMETRY</scope>
    <source>
        <strain>Taiwan</strain>
        <tissue>Venom</tissue>
        <tissue>Venom gland</tissue>
    </source>
</reference>
<comment type="function">
    <text evidence="6">Snake venom phospholipase A2 (PLA2) that shows a moderate inhibition of ADP-induced human platelet aggregation when tested on platelet rich plasma. Exhibits high hydrolytic activities and prefers the anionic micelles (dPPC with deoxycholate) to the zwitterionic micelles (dPPC with Triton X-100). PLA2 catalyzes the calcium-dependent hydrolysis of the 2-acyl groups in 3-sn-phosphoglycerides.</text>
</comment>
<comment type="catalytic activity">
    <reaction evidence="4 5">
        <text>a 1,2-diacyl-sn-glycero-3-phosphocholine + H2O = a 1-acyl-sn-glycero-3-phosphocholine + a fatty acid + H(+)</text>
        <dbReference type="Rhea" id="RHEA:15801"/>
        <dbReference type="ChEBI" id="CHEBI:15377"/>
        <dbReference type="ChEBI" id="CHEBI:15378"/>
        <dbReference type="ChEBI" id="CHEBI:28868"/>
        <dbReference type="ChEBI" id="CHEBI:57643"/>
        <dbReference type="ChEBI" id="CHEBI:58168"/>
        <dbReference type="EC" id="3.1.1.4"/>
    </reaction>
</comment>
<comment type="cofactor">
    <cofactor evidence="1">
        <name>Ca(2+)</name>
        <dbReference type="ChEBI" id="CHEBI:29108"/>
    </cofactor>
    <text evidence="1">Binds 1 Ca(2+) ion.</text>
</comment>
<comment type="subcellular location">
    <subcellularLocation>
        <location>Secreted</location>
    </subcellularLocation>
</comment>
<comment type="tissue specificity">
    <text>Expressed by the venom gland.</text>
</comment>
<comment type="developmental stage">
    <text evidence="6">Is expressed more abundantly in juvenile than in adult vipers.</text>
</comment>
<comment type="mass spectrometry" mass="13734.0" method="Electrospray" evidence="6"/>
<comment type="similarity">
    <text evidence="7">Belongs to the phospholipase A2 family. Group II subfamily. D49 sub-subfamily.</text>
</comment>
<comment type="caution">
    <text evidence="7">According to PubMed:12959640, T.stejnegeri was formerly named T.gramineus, supposing that this protein is the same as PLA-I from T.gramineus. They have been kept separated, because T.gramineus and T.stejnegeri are considered as being two different species (see http://reptile-database.org).</text>
</comment>
<protein>
    <recommendedName>
        <fullName>Acidic phospholipase A2 Ts-A1</fullName>
        <shortName>svPLA2</shortName>
        <ecNumber>3.1.1.4</ecNumber>
    </recommendedName>
    <alternativeName>
        <fullName>Phosphatidylcholine 2-acylhydrolase</fullName>
    </alternativeName>
</protein>
<name>PA2AA_TRIST</name>